<sequence>MIQQETRLKVADNSGAREVLTIKVLGGSGRKTANIGDVIVCTVKNATPGGVVKKGDVVKAVIVRTKSGVRRNDGSYIKFDENACVIIRDDKGPRGTRIFGPVARELREGNFMKIVSLAPEVL</sequence>
<reference key="1">
    <citation type="journal article" date="2006" name="Lancet">
        <title>Complete genome sequence of USA300, an epidemic clone of community-acquired meticillin-resistant Staphylococcus aureus.</title>
        <authorList>
            <person name="Diep B.A."/>
            <person name="Gill S.R."/>
            <person name="Chang R.F."/>
            <person name="Phan T.H."/>
            <person name="Chen J.H."/>
            <person name="Davidson M.G."/>
            <person name="Lin F."/>
            <person name="Lin J."/>
            <person name="Carleton H.A."/>
            <person name="Mongodin E.F."/>
            <person name="Sensabaugh G.F."/>
            <person name="Perdreau-Remington F."/>
        </authorList>
    </citation>
    <scope>NUCLEOTIDE SEQUENCE [LARGE SCALE GENOMIC DNA]</scope>
    <source>
        <strain>USA300</strain>
    </source>
</reference>
<comment type="function">
    <text evidence="1">Binds to 23S rRNA. Forms part of two intersubunit bridges in the 70S ribosome.</text>
</comment>
<comment type="subunit">
    <text evidence="1">Part of the 50S ribosomal subunit. Forms a cluster with proteins L3 and L19. In the 70S ribosome, L14 and L19 interact and together make contacts with the 16S rRNA in bridges B5 and B8.</text>
</comment>
<comment type="similarity">
    <text evidence="1">Belongs to the universal ribosomal protein uL14 family.</text>
</comment>
<gene>
    <name evidence="1" type="primary">rplN</name>
    <name type="ordered locus">SAUSA300_2194</name>
</gene>
<feature type="chain" id="PRO_1000055706" description="Large ribosomal subunit protein uL14">
    <location>
        <begin position="1"/>
        <end position="122"/>
    </location>
</feature>
<evidence type="ECO:0000255" key="1">
    <source>
        <dbReference type="HAMAP-Rule" id="MF_01367"/>
    </source>
</evidence>
<evidence type="ECO:0000305" key="2"/>
<proteinExistence type="inferred from homology"/>
<dbReference type="EMBL" id="CP000255">
    <property type="protein sequence ID" value="ABD22617.1"/>
    <property type="molecule type" value="Genomic_DNA"/>
</dbReference>
<dbReference type="RefSeq" id="WP_000615921.1">
    <property type="nucleotide sequence ID" value="NZ_CP027476.1"/>
</dbReference>
<dbReference type="SMR" id="Q2FEP9"/>
<dbReference type="GeneID" id="98346552"/>
<dbReference type="KEGG" id="saa:SAUSA300_2194"/>
<dbReference type="HOGENOM" id="CLU_095071_2_1_9"/>
<dbReference type="OMA" id="MIQMQTR"/>
<dbReference type="Proteomes" id="UP000001939">
    <property type="component" value="Chromosome"/>
</dbReference>
<dbReference type="GO" id="GO:0022625">
    <property type="term" value="C:cytosolic large ribosomal subunit"/>
    <property type="evidence" value="ECO:0007669"/>
    <property type="project" value="TreeGrafter"/>
</dbReference>
<dbReference type="GO" id="GO:0070180">
    <property type="term" value="F:large ribosomal subunit rRNA binding"/>
    <property type="evidence" value="ECO:0007669"/>
    <property type="project" value="TreeGrafter"/>
</dbReference>
<dbReference type="GO" id="GO:0003735">
    <property type="term" value="F:structural constituent of ribosome"/>
    <property type="evidence" value="ECO:0007669"/>
    <property type="project" value="InterPro"/>
</dbReference>
<dbReference type="GO" id="GO:0006412">
    <property type="term" value="P:translation"/>
    <property type="evidence" value="ECO:0007669"/>
    <property type="project" value="UniProtKB-UniRule"/>
</dbReference>
<dbReference type="CDD" id="cd00337">
    <property type="entry name" value="Ribosomal_uL14"/>
    <property type="match status" value="1"/>
</dbReference>
<dbReference type="FunFam" id="2.40.150.20:FF:000001">
    <property type="entry name" value="50S ribosomal protein L14"/>
    <property type="match status" value="1"/>
</dbReference>
<dbReference type="Gene3D" id="2.40.150.20">
    <property type="entry name" value="Ribosomal protein L14"/>
    <property type="match status" value="1"/>
</dbReference>
<dbReference type="HAMAP" id="MF_01367">
    <property type="entry name" value="Ribosomal_uL14"/>
    <property type="match status" value="1"/>
</dbReference>
<dbReference type="InterPro" id="IPR000218">
    <property type="entry name" value="Ribosomal_uL14"/>
</dbReference>
<dbReference type="InterPro" id="IPR005745">
    <property type="entry name" value="Ribosomal_uL14_bac-type"/>
</dbReference>
<dbReference type="InterPro" id="IPR019972">
    <property type="entry name" value="Ribosomal_uL14_CS"/>
</dbReference>
<dbReference type="InterPro" id="IPR036853">
    <property type="entry name" value="Ribosomal_uL14_sf"/>
</dbReference>
<dbReference type="NCBIfam" id="TIGR01067">
    <property type="entry name" value="rplN_bact"/>
    <property type="match status" value="1"/>
</dbReference>
<dbReference type="PANTHER" id="PTHR11761">
    <property type="entry name" value="50S/60S RIBOSOMAL PROTEIN L14/L23"/>
    <property type="match status" value="1"/>
</dbReference>
<dbReference type="PANTHER" id="PTHR11761:SF3">
    <property type="entry name" value="LARGE RIBOSOMAL SUBUNIT PROTEIN UL14M"/>
    <property type="match status" value="1"/>
</dbReference>
<dbReference type="Pfam" id="PF00238">
    <property type="entry name" value="Ribosomal_L14"/>
    <property type="match status" value="1"/>
</dbReference>
<dbReference type="SMART" id="SM01374">
    <property type="entry name" value="Ribosomal_L14"/>
    <property type="match status" value="1"/>
</dbReference>
<dbReference type="SUPFAM" id="SSF50193">
    <property type="entry name" value="Ribosomal protein L14"/>
    <property type="match status" value="1"/>
</dbReference>
<dbReference type="PROSITE" id="PS00049">
    <property type="entry name" value="RIBOSOMAL_L14"/>
    <property type="match status" value="1"/>
</dbReference>
<accession>Q2FEP9</accession>
<organism>
    <name type="scientific">Staphylococcus aureus (strain USA300)</name>
    <dbReference type="NCBI Taxonomy" id="367830"/>
    <lineage>
        <taxon>Bacteria</taxon>
        <taxon>Bacillati</taxon>
        <taxon>Bacillota</taxon>
        <taxon>Bacilli</taxon>
        <taxon>Bacillales</taxon>
        <taxon>Staphylococcaceae</taxon>
        <taxon>Staphylococcus</taxon>
    </lineage>
</organism>
<name>RL14_STAA3</name>
<keyword id="KW-0687">Ribonucleoprotein</keyword>
<keyword id="KW-0689">Ribosomal protein</keyword>
<keyword id="KW-0694">RNA-binding</keyword>
<keyword id="KW-0699">rRNA-binding</keyword>
<protein>
    <recommendedName>
        <fullName evidence="1">Large ribosomal subunit protein uL14</fullName>
    </recommendedName>
    <alternativeName>
        <fullName evidence="2">50S ribosomal protein L14</fullName>
    </alternativeName>
</protein>